<comment type="similarity">
    <text evidence="1">Belongs to the bacterial ribosomal protein bL33 family.</text>
</comment>
<reference key="1">
    <citation type="submission" date="2008-01" db="EMBL/GenBank/DDBJ databases">
        <title>Complete sequence of Shewanella halifaxensis HAW-EB4.</title>
        <authorList>
            <consortium name="US DOE Joint Genome Institute"/>
            <person name="Copeland A."/>
            <person name="Lucas S."/>
            <person name="Lapidus A."/>
            <person name="Glavina del Rio T."/>
            <person name="Dalin E."/>
            <person name="Tice H."/>
            <person name="Bruce D."/>
            <person name="Goodwin L."/>
            <person name="Pitluck S."/>
            <person name="Sims D."/>
            <person name="Brettin T."/>
            <person name="Detter J.C."/>
            <person name="Han C."/>
            <person name="Kuske C.R."/>
            <person name="Schmutz J."/>
            <person name="Larimer F."/>
            <person name="Land M."/>
            <person name="Hauser L."/>
            <person name="Kyrpides N."/>
            <person name="Kim E."/>
            <person name="Zhao J.-S."/>
            <person name="Richardson P."/>
        </authorList>
    </citation>
    <scope>NUCLEOTIDE SEQUENCE [LARGE SCALE GENOMIC DNA]</scope>
    <source>
        <strain>HAW-EB4</strain>
    </source>
</reference>
<keyword id="KW-0687">Ribonucleoprotein</keyword>
<keyword id="KW-0689">Ribosomal protein</keyword>
<name>RL33_SHEHH</name>
<organism>
    <name type="scientific">Shewanella halifaxensis (strain HAW-EB4)</name>
    <dbReference type="NCBI Taxonomy" id="458817"/>
    <lineage>
        <taxon>Bacteria</taxon>
        <taxon>Pseudomonadati</taxon>
        <taxon>Pseudomonadota</taxon>
        <taxon>Gammaproteobacteria</taxon>
        <taxon>Alteromonadales</taxon>
        <taxon>Shewanellaceae</taxon>
        <taxon>Shewanella</taxon>
    </lineage>
</organism>
<evidence type="ECO:0000255" key="1">
    <source>
        <dbReference type="HAMAP-Rule" id="MF_00294"/>
    </source>
</evidence>
<evidence type="ECO:0000305" key="2"/>
<gene>
    <name evidence="1" type="primary">rpmG</name>
    <name type="ordered locus">Shal_0431</name>
</gene>
<proteinExistence type="inferred from homology"/>
<feature type="chain" id="PRO_0000356658" description="Large ribosomal subunit protein bL33">
    <location>
        <begin position="1"/>
        <end position="57"/>
    </location>
</feature>
<sequence length="57" mass="6709">MAKAKGNREKIKLVSSANTGHFYTTEKNKRNMPEKMEIKKFDPVVRQHVMYKEAKIK</sequence>
<accession>B0TQL3</accession>
<dbReference type="EMBL" id="CP000931">
    <property type="protein sequence ID" value="ABZ75006.1"/>
    <property type="molecule type" value="Genomic_DNA"/>
</dbReference>
<dbReference type="RefSeq" id="WP_012275560.1">
    <property type="nucleotide sequence ID" value="NC_010334.1"/>
</dbReference>
<dbReference type="SMR" id="B0TQL3"/>
<dbReference type="STRING" id="458817.Shal_0431"/>
<dbReference type="KEGG" id="shl:Shal_0431"/>
<dbReference type="eggNOG" id="COG0267">
    <property type="taxonomic scope" value="Bacteria"/>
</dbReference>
<dbReference type="HOGENOM" id="CLU_190949_1_1_6"/>
<dbReference type="OrthoDB" id="21586at2"/>
<dbReference type="Proteomes" id="UP000001317">
    <property type="component" value="Chromosome"/>
</dbReference>
<dbReference type="GO" id="GO:0022625">
    <property type="term" value="C:cytosolic large ribosomal subunit"/>
    <property type="evidence" value="ECO:0007669"/>
    <property type="project" value="TreeGrafter"/>
</dbReference>
<dbReference type="GO" id="GO:0003735">
    <property type="term" value="F:structural constituent of ribosome"/>
    <property type="evidence" value="ECO:0007669"/>
    <property type="project" value="InterPro"/>
</dbReference>
<dbReference type="GO" id="GO:0006412">
    <property type="term" value="P:translation"/>
    <property type="evidence" value="ECO:0007669"/>
    <property type="project" value="UniProtKB-UniRule"/>
</dbReference>
<dbReference type="FunFam" id="2.20.28.120:FF:000001">
    <property type="entry name" value="50S ribosomal protein L33"/>
    <property type="match status" value="1"/>
</dbReference>
<dbReference type="Gene3D" id="2.20.28.120">
    <property type="entry name" value="Ribosomal protein L33"/>
    <property type="match status" value="1"/>
</dbReference>
<dbReference type="HAMAP" id="MF_00294">
    <property type="entry name" value="Ribosomal_bL33"/>
    <property type="match status" value="1"/>
</dbReference>
<dbReference type="InterPro" id="IPR001705">
    <property type="entry name" value="Ribosomal_bL33"/>
</dbReference>
<dbReference type="InterPro" id="IPR018264">
    <property type="entry name" value="Ribosomal_bL33_CS"/>
</dbReference>
<dbReference type="InterPro" id="IPR038584">
    <property type="entry name" value="Ribosomal_bL33_sf"/>
</dbReference>
<dbReference type="InterPro" id="IPR011332">
    <property type="entry name" value="Ribosomal_zn-bd"/>
</dbReference>
<dbReference type="NCBIfam" id="NF001860">
    <property type="entry name" value="PRK00595.1"/>
    <property type="match status" value="1"/>
</dbReference>
<dbReference type="NCBIfam" id="TIGR01023">
    <property type="entry name" value="rpmG_bact"/>
    <property type="match status" value="1"/>
</dbReference>
<dbReference type="PANTHER" id="PTHR15238">
    <property type="entry name" value="54S RIBOSOMAL PROTEIN L39, MITOCHONDRIAL"/>
    <property type="match status" value="1"/>
</dbReference>
<dbReference type="PANTHER" id="PTHR15238:SF1">
    <property type="entry name" value="LARGE RIBOSOMAL SUBUNIT PROTEIN BL33M"/>
    <property type="match status" value="1"/>
</dbReference>
<dbReference type="Pfam" id="PF00471">
    <property type="entry name" value="Ribosomal_L33"/>
    <property type="match status" value="1"/>
</dbReference>
<dbReference type="SUPFAM" id="SSF57829">
    <property type="entry name" value="Zn-binding ribosomal proteins"/>
    <property type="match status" value="1"/>
</dbReference>
<dbReference type="PROSITE" id="PS00582">
    <property type="entry name" value="RIBOSOMAL_L33"/>
    <property type="match status" value="1"/>
</dbReference>
<protein>
    <recommendedName>
        <fullName evidence="1">Large ribosomal subunit protein bL33</fullName>
    </recommendedName>
    <alternativeName>
        <fullName evidence="2">50S ribosomal protein L33</fullName>
    </alternativeName>
</protein>